<accession>B2S074</accession>
<proteinExistence type="inferred from homology"/>
<comment type="function">
    <text evidence="1">Catalyzes the attachment of tyrosine to tRNA(Tyr) in a two-step reaction: tyrosine is first activated by ATP to form Tyr-AMP and then transferred to the acceptor end of tRNA(Tyr).</text>
</comment>
<comment type="catalytic activity">
    <reaction evidence="1">
        <text>tRNA(Tyr) + L-tyrosine + ATP = L-tyrosyl-tRNA(Tyr) + AMP + diphosphate + H(+)</text>
        <dbReference type="Rhea" id="RHEA:10220"/>
        <dbReference type="Rhea" id="RHEA-COMP:9706"/>
        <dbReference type="Rhea" id="RHEA-COMP:9707"/>
        <dbReference type="ChEBI" id="CHEBI:15378"/>
        <dbReference type="ChEBI" id="CHEBI:30616"/>
        <dbReference type="ChEBI" id="CHEBI:33019"/>
        <dbReference type="ChEBI" id="CHEBI:58315"/>
        <dbReference type="ChEBI" id="CHEBI:78442"/>
        <dbReference type="ChEBI" id="CHEBI:78536"/>
        <dbReference type="ChEBI" id="CHEBI:456215"/>
        <dbReference type="EC" id="6.1.1.1"/>
    </reaction>
</comment>
<comment type="subunit">
    <text evidence="1">Homodimer.</text>
</comment>
<comment type="subcellular location">
    <subcellularLocation>
        <location evidence="1">Cytoplasm</location>
    </subcellularLocation>
</comment>
<comment type="similarity">
    <text evidence="1">Belongs to the class-I aminoacyl-tRNA synthetase family. TyrS type 1 subfamily.</text>
</comment>
<organism>
    <name type="scientific">Borrelia hermsii (strain HS1 / DAH)</name>
    <dbReference type="NCBI Taxonomy" id="314723"/>
    <lineage>
        <taxon>Bacteria</taxon>
        <taxon>Pseudomonadati</taxon>
        <taxon>Spirochaetota</taxon>
        <taxon>Spirochaetia</taxon>
        <taxon>Spirochaetales</taxon>
        <taxon>Borreliaceae</taxon>
        <taxon>Borrelia</taxon>
    </lineage>
</organism>
<gene>
    <name evidence="1" type="primary">tyrS</name>
    <name type="ordered locus">BH0370</name>
</gene>
<protein>
    <recommendedName>
        <fullName evidence="1">Tyrosine--tRNA ligase</fullName>
        <ecNumber evidence="1">6.1.1.1</ecNumber>
    </recommendedName>
    <alternativeName>
        <fullName evidence="1">Tyrosyl-tRNA synthetase</fullName>
        <shortName evidence="1">TyrRS</shortName>
    </alternativeName>
</protein>
<evidence type="ECO:0000255" key="1">
    <source>
        <dbReference type="HAMAP-Rule" id="MF_02006"/>
    </source>
</evidence>
<name>SYY_BORHD</name>
<feature type="chain" id="PRO_1000189263" description="Tyrosine--tRNA ligase">
    <location>
        <begin position="1"/>
        <end position="406"/>
    </location>
</feature>
<feature type="domain" description="S4 RNA-binding" evidence="1">
    <location>
        <begin position="341"/>
        <end position="405"/>
    </location>
</feature>
<feature type="short sequence motif" description="'HIGH' region">
    <location>
        <begin position="40"/>
        <end position="49"/>
    </location>
</feature>
<feature type="short sequence motif" description="'KMSKS' region">
    <location>
        <begin position="226"/>
        <end position="230"/>
    </location>
</feature>
<feature type="binding site" evidence="1">
    <location>
        <position position="35"/>
    </location>
    <ligand>
        <name>L-tyrosine</name>
        <dbReference type="ChEBI" id="CHEBI:58315"/>
    </ligand>
</feature>
<feature type="binding site" evidence="1">
    <location>
        <position position="166"/>
    </location>
    <ligand>
        <name>L-tyrosine</name>
        <dbReference type="ChEBI" id="CHEBI:58315"/>
    </ligand>
</feature>
<feature type="binding site" evidence="1">
    <location>
        <position position="170"/>
    </location>
    <ligand>
        <name>L-tyrosine</name>
        <dbReference type="ChEBI" id="CHEBI:58315"/>
    </ligand>
</feature>
<feature type="binding site" evidence="1">
    <location>
        <position position="229"/>
    </location>
    <ligand>
        <name>ATP</name>
        <dbReference type="ChEBI" id="CHEBI:30616"/>
    </ligand>
</feature>
<reference key="1">
    <citation type="submission" date="2004-12" db="EMBL/GenBank/DDBJ databases">
        <title>The genome sequence of Borrelia hermsii and Borrelia turicatae: comparative analysis of two agents of endemic N. America relapsing fever.</title>
        <authorList>
            <person name="Porcella S.F."/>
            <person name="Raffel S.J."/>
            <person name="Schrumpf M.E."/>
            <person name="Montgomery B."/>
            <person name="Smith T."/>
            <person name="Schwan T.G."/>
        </authorList>
    </citation>
    <scope>NUCLEOTIDE SEQUENCE [LARGE SCALE GENOMIC DNA]</scope>
    <source>
        <strain>HS1 / DAH</strain>
    </source>
</reference>
<sequence>MNLALGILEKRGFLKQCTNLEALSVLMDREKMVFYVGVDATSTSLHIGHLIPFMAMAHLQRQGHIPIALVGGGTTKIGDPSGKDVMRKILPKEDIEANVKAIKEQLLRIIDFSHGYIIDNSEWLDNINYIEFLRDIGVYFSVNRMLGFETYKRRLKDGLSFIEFNYQLLQSYDFYMLNKLKNCKLQIGGDDQWGNIVSGVDLVKRKLGTEVFGLTLPLITRSDGKKMGKSEKGAVYLDSKLYSVYDFYQYFRNVPDLDVKKFLYLFTFLEDDEIEHISSFQGYLLNKAKETLAFEITKIVHGESAALKASSAASAAFKGGEGDKSDIPFFKLALTSLEGTILLVDLMVSSKIVSSKSEARRLISSGGVYVDKVRIGDQNYCLNKDSFANGAIELRIGKKKILRIIL</sequence>
<dbReference type="EC" id="6.1.1.1" evidence="1"/>
<dbReference type="EMBL" id="CP000048">
    <property type="protein sequence ID" value="AAX16880.1"/>
    <property type="molecule type" value="Genomic_DNA"/>
</dbReference>
<dbReference type="RefSeq" id="WP_012422137.1">
    <property type="nucleotide sequence ID" value="NZ_CP073136.1"/>
</dbReference>
<dbReference type="SMR" id="B2S074"/>
<dbReference type="GeneID" id="71843177"/>
<dbReference type="KEGG" id="bhr:BH0370"/>
<dbReference type="HOGENOM" id="CLU_024003_0_3_12"/>
<dbReference type="Proteomes" id="UP000008834">
    <property type="component" value="Chromosome"/>
</dbReference>
<dbReference type="GO" id="GO:0005829">
    <property type="term" value="C:cytosol"/>
    <property type="evidence" value="ECO:0007669"/>
    <property type="project" value="TreeGrafter"/>
</dbReference>
<dbReference type="GO" id="GO:0005524">
    <property type="term" value="F:ATP binding"/>
    <property type="evidence" value="ECO:0007669"/>
    <property type="project" value="UniProtKB-UniRule"/>
</dbReference>
<dbReference type="GO" id="GO:0003723">
    <property type="term" value="F:RNA binding"/>
    <property type="evidence" value="ECO:0007669"/>
    <property type="project" value="UniProtKB-KW"/>
</dbReference>
<dbReference type="GO" id="GO:0004831">
    <property type="term" value="F:tyrosine-tRNA ligase activity"/>
    <property type="evidence" value="ECO:0007669"/>
    <property type="project" value="UniProtKB-UniRule"/>
</dbReference>
<dbReference type="GO" id="GO:0006437">
    <property type="term" value="P:tyrosyl-tRNA aminoacylation"/>
    <property type="evidence" value="ECO:0007669"/>
    <property type="project" value="UniProtKB-UniRule"/>
</dbReference>
<dbReference type="CDD" id="cd00805">
    <property type="entry name" value="TyrRS_core"/>
    <property type="match status" value="1"/>
</dbReference>
<dbReference type="FunFam" id="1.10.240.10:FF:000001">
    <property type="entry name" value="Tyrosine--tRNA ligase"/>
    <property type="match status" value="1"/>
</dbReference>
<dbReference type="Gene3D" id="3.40.50.620">
    <property type="entry name" value="HUPs"/>
    <property type="match status" value="1"/>
</dbReference>
<dbReference type="Gene3D" id="3.10.290.10">
    <property type="entry name" value="RNA-binding S4 domain"/>
    <property type="match status" value="1"/>
</dbReference>
<dbReference type="Gene3D" id="1.10.240.10">
    <property type="entry name" value="Tyrosyl-Transfer RNA Synthetase"/>
    <property type="match status" value="1"/>
</dbReference>
<dbReference type="HAMAP" id="MF_02006">
    <property type="entry name" value="Tyr_tRNA_synth_type1"/>
    <property type="match status" value="1"/>
</dbReference>
<dbReference type="InterPro" id="IPR002305">
    <property type="entry name" value="aa-tRNA-synth_Ic"/>
</dbReference>
<dbReference type="InterPro" id="IPR014729">
    <property type="entry name" value="Rossmann-like_a/b/a_fold"/>
</dbReference>
<dbReference type="InterPro" id="IPR002942">
    <property type="entry name" value="S4_RNA-bd"/>
</dbReference>
<dbReference type="InterPro" id="IPR036986">
    <property type="entry name" value="S4_RNA-bd_sf"/>
</dbReference>
<dbReference type="InterPro" id="IPR054608">
    <property type="entry name" value="SYY-like_C"/>
</dbReference>
<dbReference type="InterPro" id="IPR002307">
    <property type="entry name" value="Tyr-tRNA-ligase"/>
</dbReference>
<dbReference type="InterPro" id="IPR024088">
    <property type="entry name" value="Tyr-tRNA-ligase_bac-type"/>
</dbReference>
<dbReference type="InterPro" id="IPR024107">
    <property type="entry name" value="Tyr-tRNA-ligase_bac_1"/>
</dbReference>
<dbReference type="NCBIfam" id="TIGR00234">
    <property type="entry name" value="tyrS"/>
    <property type="match status" value="1"/>
</dbReference>
<dbReference type="PANTHER" id="PTHR11766:SF0">
    <property type="entry name" value="TYROSINE--TRNA LIGASE, MITOCHONDRIAL"/>
    <property type="match status" value="1"/>
</dbReference>
<dbReference type="PANTHER" id="PTHR11766">
    <property type="entry name" value="TYROSYL-TRNA SYNTHETASE"/>
    <property type="match status" value="1"/>
</dbReference>
<dbReference type="Pfam" id="PF22421">
    <property type="entry name" value="SYY_C-terminal"/>
    <property type="match status" value="1"/>
</dbReference>
<dbReference type="Pfam" id="PF00579">
    <property type="entry name" value="tRNA-synt_1b"/>
    <property type="match status" value="1"/>
</dbReference>
<dbReference type="PRINTS" id="PR01040">
    <property type="entry name" value="TRNASYNTHTYR"/>
</dbReference>
<dbReference type="SMART" id="SM00363">
    <property type="entry name" value="S4"/>
    <property type="match status" value="1"/>
</dbReference>
<dbReference type="SUPFAM" id="SSF55174">
    <property type="entry name" value="Alpha-L RNA-binding motif"/>
    <property type="match status" value="1"/>
</dbReference>
<dbReference type="SUPFAM" id="SSF52374">
    <property type="entry name" value="Nucleotidylyl transferase"/>
    <property type="match status" value="1"/>
</dbReference>
<dbReference type="PROSITE" id="PS50889">
    <property type="entry name" value="S4"/>
    <property type="match status" value="1"/>
</dbReference>
<keyword id="KW-0030">Aminoacyl-tRNA synthetase</keyword>
<keyword id="KW-0067">ATP-binding</keyword>
<keyword id="KW-0963">Cytoplasm</keyword>
<keyword id="KW-0436">Ligase</keyword>
<keyword id="KW-0547">Nucleotide-binding</keyword>
<keyword id="KW-0648">Protein biosynthesis</keyword>
<keyword id="KW-0694">RNA-binding</keyword>